<dbReference type="EC" id="2.7.1.24" evidence="1"/>
<dbReference type="EMBL" id="CP000016">
    <property type="protein sequence ID" value="AAZ40793.1"/>
    <property type="molecule type" value="Genomic_DNA"/>
</dbReference>
<dbReference type="RefSeq" id="WP_011282700.1">
    <property type="nucleotide sequence ID" value="NC_007292.1"/>
</dbReference>
<dbReference type="SMR" id="Q493P4"/>
<dbReference type="STRING" id="291272.BPEN_153"/>
<dbReference type="KEGG" id="bpn:BPEN_153"/>
<dbReference type="eggNOG" id="COG0237">
    <property type="taxonomic scope" value="Bacteria"/>
</dbReference>
<dbReference type="HOGENOM" id="CLU_057180_1_2_6"/>
<dbReference type="OrthoDB" id="9812943at2"/>
<dbReference type="UniPathway" id="UPA00241">
    <property type="reaction ID" value="UER00356"/>
</dbReference>
<dbReference type="Proteomes" id="UP000007794">
    <property type="component" value="Chromosome"/>
</dbReference>
<dbReference type="GO" id="GO:0005737">
    <property type="term" value="C:cytoplasm"/>
    <property type="evidence" value="ECO:0007669"/>
    <property type="project" value="UniProtKB-SubCell"/>
</dbReference>
<dbReference type="GO" id="GO:0005524">
    <property type="term" value="F:ATP binding"/>
    <property type="evidence" value="ECO:0007669"/>
    <property type="project" value="UniProtKB-UniRule"/>
</dbReference>
<dbReference type="GO" id="GO:0004140">
    <property type="term" value="F:dephospho-CoA kinase activity"/>
    <property type="evidence" value="ECO:0007669"/>
    <property type="project" value="UniProtKB-UniRule"/>
</dbReference>
<dbReference type="GO" id="GO:0015937">
    <property type="term" value="P:coenzyme A biosynthetic process"/>
    <property type="evidence" value="ECO:0007669"/>
    <property type="project" value="UniProtKB-UniRule"/>
</dbReference>
<dbReference type="CDD" id="cd02022">
    <property type="entry name" value="DPCK"/>
    <property type="match status" value="1"/>
</dbReference>
<dbReference type="Gene3D" id="3.40.50.300">
    <property type="entry name" value="P-loop containing nucleotide triphosphate hydrolases"/>
    <property type="match status" value="1"/>
</dbReference>
<dbReference type="HAMAP" id="MF_00376">
    <property type="entry name" value="Dephospho_CoA_kinase"/>
    <property type="match status" value="1"/>
</dbReference>
<dbReference type="InterPro" id="IPR001977">
    <property type="entry name" value="Depp_CoAkinase"/>
</dbReference>
<dbReference type="InterPro" id="IPR027417">
    <property type="entry name" value="P-loop_NTPase"/>
</dbReference>
<dbReference type="NCBIfam" id="TIGR00152">
    <property type="entry name" value="dephospho-CoA kinase"/>
    <property type="match status" value="1"/>
</dbReference>
<dbReference type="PANTHER" id="PTHR10695:SF46">
    <property type="entry name" value="BIFUNCTIONAL COENZYME A SYNTHASE-RELATED"/>
    <property type="match status" value="1"/>
</dbReference>
<dbReference type="PANTHER" id="PTHR10695">
    <property type="entry name" value="DEPHOSPHO-COA KINASE-RELATED"/>
    <property type="match status" value="1"/>
</dbReference>
<dbReference type="Pfam" id="PF01121">
    <property type="entry name" value="CoaE"/>
    <property type="match status" value="1"/>
</dbReference>
<dbReference type="SUPFAM" id="SSF52540">
    <property type="entry name" value="P-loop containing nucleoside triphosphate hydrolases"/>
    <property type="match status" value="1"/>
</dbReference>
<dbReference type="PROSITE" id="PS51219">
    <property type="entry name" value="DPCK"/>
    <property type="match status" value="1"/>
</dbReference>
<proteinExistence type="inferred from homology"/>
<keyword id="KW-0067">ATP-binding</keyword>
<keyword id="KW-0173">Coenzyme A biosynthesis</keyword>
<keyword id="KW-0963">Cytoplasm</keyword>
<keyword id="KW-0418">Kinase</keyword>
<keyword id="KW-0547">Nucleotide-binding</keyword>
<keyword id="KW-1185">Reference proteome</keyword>
<keyword id="KW-0808">Transferase</keyword>
<reference key="1">
    <citation type="journal article" date="2005" name="Genome Res.">
        <title>Genome sequence of Blochmannia pennsylvanicus indicates parallel evolutionary trends among bacterial mutualists of insects.</title>
        <authorList>
            <person name="Degnan P.H."/>
            <person name="Lazarus A.B."/>
            <person name="Wernegreen J.J."/>
        </authorList>
    </citation>
    <scope>NUCLEOTIDE SEQUENCE [LARGE SCALE GENOMIC DNA]</scope>
    <source>
        <strain>BPEN</strain>
    </source>
</reference>
<name>COAE_BLOPB</name>
<organism>
    <name type="scientific">Blochmanniella pennsylvanica (strain BPEN)</name>
    <dbReference type="NCBI Taxonomy" id="291272"/>
    <lineage>
        <taxon>Bacteria</taxon>
        <taxon>Pseudomonadati</taxon>
        <taxon>Pseudomonadota</taxon>
        <taxon>Gammaproteobacteria</taxon>
        <taxon>Enterobacterales</taxon>
        <taxon>Enterobacteriaceae</taxon>
        <taxon>ant endosymbionts</taxon>
        <taxon>Candidatus Blochmanniella</taxon>
    </lineage>
</organism>
<protein>
    <recommendedName>
        <fullName evidence="1">Dephospho-CoA kinase</fullName>
        <ecNumber evidence="1">2.7.1.24</ecNumber>
    </recommendedName>
    <alternativeName>
        <fullName evidence="1">Dephosphocoenzyme A kinase</fullName>
    </alternativeName>
</protein>
<accession>Q493P4</accession>
<feature type="chain" id="PRO_0000243262" description="Dephospho-CoA kinase">
    <location>
        <begin position="1"/>
        <end position="212"/>
    </location>
</feature>
<feature type="domain" description="DPCK" evidence="1">
    <location>
        <begin position="4"/>
        <end position="204"/>
    </location>
</feature>
<feature type="binding site" evidence="1">
    <location>
        <begin position="12"/>
        <end position="17"/>
    </location>
    <ligand>
        <name>ATP</name>
        <dbReference type="ChEBI" id="CHEBI:30616"/>
    </ligand>
</feature>
<gene>
    <name evidence="1" type="primary">coaE</name>
    <name type="ordered locus">BPEN_153</name>
</gene>
<comment type="function">
    <text evidence="1">Catalyzes the phosphorylation of the 3'-hydroxyl group of dephosphocoenzyme A to form coenzyme A.</text>
</comment>
<comment type="catalytic activity">
    <reaction evidence="1">
        <text>3'-dephospho-CoA + ATP = ADP + CoA + H(+)</text>
        <dbReference type="Rhea" id="RHEA:18245"/>
        <dbReference type="ChEBI" id="CHEBI:15378"/>
        <dbReference type="ChEBI" id="CHEBI:30616"/>
        <dbReference type="ChEBI" id="CHEBI:57287"/>
        <dbReference type="ChEBI" id="CHEBI:57328"/>
        <dbReference type="ChEBI" id="CHEBI:456216"/>
        <dbReference type="EC" id="2.7.1.24"/>
    </reaction>
</comment>
<comment type="pathway">
    <text evidence="1">Cofactor biosynthesis; coenzyme A biosynthesis; CoA from (R)-pantothenate: step 5/5.</text>
</comment>
<comment type="subcellular location">
    <subcellularLocation>
        <location evidence="1">Cytoplasm</location>
    </subcellularLocation>
</comment>
<comment type="similarity">
    <text evidence="1">Belongs to the CoaE family.</text>
</comment>
<sequence length="212" mass="24382">MSYIVALTGGICSGKSVVAKKFSNLSKKVSVIDADVISKNITQPGSIALRMITKHFGPHILFSNGSLNRSMLKKIIFFNPKDKEWLEQLLHPLIRKETQKTINILSNRSSYILWVVPLLIENNLQKYADHILMIDVHVDIQLNRIISRDKIHKQYAENILLSQVSRQHRLNYADNVIENNKSIDGMTQHIHNLHRDYLKAEKTTTKKTIFSK</sequence>
<evidence type="ECO:0000255" key="1">
    <source>
        <dbReference type="HAMAP-Rule" id="MF_00376"/>
    </source>
</evidence>